<proteinExistence type="inferred from homology"/>
<organism>
    <name type="scientific">Mycobacterium avium (strain 104)</name>
    <dbReference type="NCBI Taxonomy" id="243243"/>
    <lineage>
        <taxon>Bacteria</taxon>
        <taxon>Bacillati</taxon>
        <taxon>Actinomycetota</taxon>
        <taxon>Actinomycetes</taxon>
        <taxon>Mycobacteriales</taxon>
        <taxon>Mycobacteriaceae</taxon>
        <taxon>Mycobacterium</taxon>
        <taxon>Mycobacterium avium complex (MAC)</taxon>
    </lineage>
</organism>
<sequence length="155" mass="16941">MLGRMTRNQLTEQIVVARLAKGLTWQELADAIGRPLLWTTSALLGQHPIPAELGRILVDKLGLDESAVPVLAAPPMRGGLPTAVPTDPTIYRFYEALQVYGGALKEVIAEQFGDGIMSAINFSVDLQKKPHPSGDRVVVTFDGKFLPYQWVSSEQ</sequence>
<comment type="function">
    <text evidence="1">Catalyzes the reaction of cyanate with bicarbonate to produce ammonia and carbon dioxide.</text>
</comment>
<comment type="catalytic activity">
    <reaction evidence="1">
        <text>cyanate + hydrogencarbonate + 3 H(+) = NH4(+) + 2 CO2</text>
        <dbReference type="Rhea" id="RHEA:11120"/>
        <dbReference type="ChEBI" id="CHEBI:15378"/>
        <dbReference type="ChEBI" id="CHEBI:16526"/>
        <dbReference type="ChEBI" id="CHEBI:17544"/>
        <dbReference type="ChEBI" id="CHEBI:28938"/>
        <dbReference type="ChEBI" id="CHEBI:29195"/>
        <dbReference type="EC" id="4.2.1.104"/>
    </reaction>
</comment>
<comment type="similarity">
    <text evidence="1">Belongs to the cyanase family.</text>
</comment>
<keyword id="KW-0456">Lyase</keyword>
<dbReference type="EC" id="4.2.1.104" evidence="1"/>
<dbReference type="EMBL" id="CP000479">
    <property type="protein sequence ID" value="ABK65296.1"/>
    <property type="molecule type" value="Genomic_DNA"/>
</dbReference>
<dbReference type="RefSeq" id="WP_003873583.1">
    <property type="nucleotide sequence ID" value="NC_008595.1"/>
</dbReference>
<dbReference type="SMR" id="A0QL81"/>
<dbReference type="GeneID" id="75272055"/>
<dbReference type="KEGG" id="mav:MAV_4538"/>
<dbReference type="HOGENOM" id="CLU_103452_1_0_11"/>
<dbReference type="Proteomes" id="UP000001574">
    <property type="component" value="Chromosome"/>
</dbReference>
<dbReference type="GO" id="GO:0008824">
    <property type="term" value="F:cyanate hydratase activity"/>
    <property type="evidence" value="ECO:0007669"/>
    <property type="project" value="UniProtKB-UniRule"/>
</dbReference>
<dbReference type="GO" id="GO:0003677">
    <property type="term" value="F:DNA binding"/>
    <property type="evidence" value="ECO:0007669"/>
    <property type="project" value="InterPro"/>
</dbReference>
<dbReference type="GO" id="GO:0009439">
    <property type="term" value="P:cyanate metabolic process"/>
    <property type="evidence" value="ECO:0007669"/>
    <property type="project" value="UniProtKB-UniRule"/>
</dbReference>
<dbReference type="CDD" id="cd00559">
    <property type="entry name" value="Cyanase_C"/>
    <property type="match status" value="1"/>
</dbReference>
<dbReference type="Gene3D" id="3.30.1160.10">
    <property type="entry name" value="Cyanate lyase, C-terminal domain"/>
    <property type="match status" value="1"/>
</dbReference>
<dbReference type="Gene3D" id="1.10.260.40">
    <property type="entry name" value="lambda repressor-like DNA-binding domains"/>
    <property type="match status" value="1"/>
</dbReference>
<dbReference type="HAMAP" id="MF_00535">
    <property type="entry name" value="Cyanate_hydrat"/>
    <property type="match status" value="1"/>
</dbReference>
<dbReference type="InterPro" id="IPR008076">
    <property type="entry name" value="Cyanase"/>
</dbReference>
<dbReference type="InterPro" id="IPR003712">
    <property type="entry name" value="Cyanate_lyase_C"/>
</dbReference>
<dbReference type="InterPro" id="IPR036581">
    <property type="entry name" value="Cyanate_lyase_C_sf"/>
</dbReference>
<dbReference type="InterPro" id="IPR048564">
    <property type="entry name" value="CYNS_N"/>
</dbReference>
<dbReference type="InterPro" id="IPR010982">
    <property type="entry name" value="Lambda_DNA-bd_dom_sf"/>
</dbReference>
<dbReference type="NCBIfam" id="TIGR00673">
    <property type="entry name" value="cynS"/>
    <property type="match status" value="1"/>
</dbReference>
<dbReference type="NCBIfam" id="NF002773">
    <property type="entry name" value="PRK02866.1"/>
    <property type="match status" value="1"/>
</dbReference>
<dbReference type="PANTHER" id="PTHR34186">
    <property type="entry name" value="CYANATE HYDRATASE"/>
    <property type="match status" value="1"/>
</dbReference>
<dbReference type="PANTHER" id="PTHR34186:SF2">
    <property type="entry name" value="CYANATE HYDRATASE"/>
    <property type="match status" value="1"/>
</dbReference>
<dbReference type="Pfam" id="PF02560">
    <property type="entry name" value="Cyanate_lyase"/>
    <property type="match status" value="1"/>
</dbReference>
<dbReference type="Pfam" id="PF21291">
    <property type="entry name" value="CYNS_N"/>
    <property type="match status" value="1"/>
</dbReference>
<dbReference type="PIRSF" id="PIRSF001263">
    <property type="entry name" value="Cyanate_hydratas"/>
    <property type="match status" value="1"/>
</dbReference>
<dbReference type="PRINTS" id="PR01693">
    <property type="entry name" value="CYANASE"/>
</dbReference>
<dbReference type="SMART" id="SM01116">
    <property type="entry name" value="Cyanate_lyase"/>
    <property type="match status" value="1"/>
</dbReference>
<dbReference type="SUPFAM" id="SSF55234">
    <property type="entry name" value="Cyanase C-terminal domain"/>
    <property type="match status" value="1"/>
</dbReference>
<dbReference type="SUPFAM" id="SSF47413">
    <property type="entry name" value="lambda repressor-like DNA-binding domains"/>
    <property type="match status" value="1"/>
</dbReference>
<name>CYNS_MYCA1</name>
<gene>
    <name evidence="1" type="primary">cynS</name>
    <name type="ordered locus">MAV_4538</name>
</gene>
<evidence type="ECO:0000255" key="1">
    <source>
        <dbReference type="HAMAP-Rule" id="MF_00535"/>
    </source>
</evidence>
<accession>A0QL81</accession>
<protein>
    <recommendedName>
        <fullName evidence="1">Cyanate hydratase</fullName>
        <shortName evidence="1">Cyanase</shortName>
        <ecNumber evidence="1">4.2.1.104</ecNumber>
    </recommendedName>
    <alternativeName>
        <fullName evidence="1">Cyanate hydrolase</fullName>
    </alternativeName>
    <alternativeName>
        <fullName evidence="1">Cyanate lyase</fullName>
    </alternativeName>
</protein>
<feature type="chain" id="PRO_1000051477" description="Cyanate hydratase">
    <location>
        <begin position="1"/>
        <end position="155"/>
    </location>
</feature>
<feature type="active site" evidence="1">
    <location>
        <position position="92"/>
    </location>
</feature>
<feature type="active site" evidence="1">
    <location>
        <position position="95"/>
    </location>
</feature>
<feature type="active site" evidence="1">
    <location>
        <position position="118"/>
    </location>
</feature>
<reference key="1">
    <citation type="submission" date="2006-10" db="EMBL/GenBank/DDBJ databases">
        <authorList>
            <person name="Fleischmann R.D."/>
            <person name="Dodson R.J."/>
            <person name="Haft D.H."/>
            <person name="Merkel J.S."/>
            <person name="Nelson W.C."/>
            <person name="Fraser C.M."/>
        </authorList>
    </citation>
    <scope>NUCLEOTIDE SEQUENCE [LARGE SCALE GENOMIC DNA]</scope>
    <source>
        <strain>104</strain>
    </source>
</reference>